<evidence type="ECO:0000255" key="1"/>
<evidence type="ECO:0000269" key="2">
    <source ref="5"/>
</evidence>
<evidence type="ECO:0000269" key="3">
    <source ref="6"/>
</evidence>
<evidence type="ECO:0000305" key="4"/>
<dbReference type="EMBL" id="AB011480">
    <property type="protein sequence ID" value="BAB11219.1"/>
    <property type="molecule type" value="Genomic_DNA"/>
</dbReference>
<dbReference type="EMBL" id="CP002688">
    <property type="protein sequence ID" value="AED92479.1"/>
    <property type="molecule type" value="Genomic_DNA"/>
</dbReference>
<dbReference type="EMBL" id="AF462830">
    <property type="protein sequence ID" value="AAL58918.1"/>
    <property type="molecule type" value="mRNA"/>
</dbReference>
<dbReference type="EMBL" id="AY142021">
    <property type="protein sequence ID" value="AAM98285.1"/>
    <property type="molecule type" value="mRNA"/>
</dbReference>
<dbReference type="RefSeq" id="NP_197288.1">
    <property type="nucleotide sequence ID" value="NM_121792.4"/>
</dbReference>
<dbReference type="BioGRID" id="16930">
    <property type="interactions" value="2"/>
</dbReference>
<dbReference type="FunCoup" id="Q9FKP1">
    <property type="interactions" value="387"/>
</dbReference>
<dbReference type="IntAct" id="Q9FKP1">
    <property type="interactions" value="2"/>
</dbReference>
<dbReference type="STRING" id="3702.Q9FKP1"/>
<dbReference type="PaxDb" id="3702-AT5G17860.1"/>
<dbReference type="ProteomicsDB" id="224382"/>
<dbReference type="EnsemblPlants" id="AT5G17860.1">
    <property type="protein sequence ID" value="AT5G17860.1"/>
    <property type="gene ID" value="AT5G17860"/>
</dbReference>
<dbReference type="GeneID" id="831654"/>
<dbReference type="Gramene" id="AT5G17860.1">
    <property type="protein sequence ID" value="AT5G17860.1"/>
    <property type="gene ID" value="AT5G17860"/>
</dbReference>
<dbReference type="KEGG" id="ath:AT5G17860"/>
<dbReference type="Araport" id="AT5G17860"/>
<dbReference type="TAIR" id="AT5G17860">
    <property type="gene designation" value="CAX7"/>
</dbReference>
<dbReference type="eggNOG" id="KOG2399">
    <property type="taxonomic scope" value="Eukaryota"/>
</dbReference>
<dbReference type="HOGENOM" id="CLU_004979_1_2_1"/>
<dbReference type="InParanoid" id="Q9FKP1"/>
<dbReference type="OMA" id="AANYFCS"/>
<dbReference type="PhylomeDB" id="Q9FKP1"/>
<dbReference type="PRO" id="PR:Q9FKP1"/>
<dbReference type="Proteomes" id="UP000006548">
    <property type="component" value="Chromosome 5"/>
</dbReference>
<dbReference type="ExpressionAtlas" id="Q9FKP1">
    <property type="expression patterns" value="baseline and differential"/>
</dbReference>
<dbReference type="GO" id="GO:0005774">
    <property type="term" value="C:vacuolar membrane"/>
    <property type="evidence" value="ECO:0007669"/>
    <property type="project" value="UniProtKB-SubCell"/>
</dbReference>
<dbReference type="GO" id="GO:0015297">
    <property type="term" value="F:antiporter activity"/>
    <property type="evidence" value="ECO:0007669"/>
    <property type="project" value="UniProtKB-KW"/>
</dbReference>
<dbReference type="GO" id="GO:0006813">
    <property type="term" value="P:potassium ion transport"/>
    <property type="evidence" value="ECO:0007669"/>
    <property type="project" value="UniProtKB-KW"/>
</dbReference>
<dbReference type="GO" id="GO:0006814">
    <property type="term" value="P:sodium ion transport"/>
    <property type="evidence" value="ECO:0007669"/>
    <property type="project" value="UniProtKB-KW"/>
</dbReference>
<dbReference type="Gene3D" id="1.20.1420.30">
    <property type="entry name" value="NCX, central ion-binding region"/>
    <property type="match status" value="2"/>
</dbReference>
<dbReference type="InterPro" id="IPR051359">
    <property type="entry name" value="CaCA_antiporter"/>
</dbReference>
<dbReference type="InterPro" id="IPR004837">
    <property type="entry name" value="NaCa_Exmemb"/>
</dbReference>
<dbReference type="InterPro" id="IPR044880">
    <property type="entry name" value="NCX_ion-bd_dom_sf"/>
</dbReference>
<dbReference type="PANTHER" id="PTHR12266:SF24">
    <property type="entry name" value="CATION_CALCIUM EXCHANGER 1"/>
    <property type="match status" value="1"/>
</dbReference>
<dbReference type="PANTHER" id="PTHR12266">
    <property type="entry name" value="NA+/CA2+ K+ INDEPENDENT EXCHANGER"/>
    <property type="match status" value="1"/>
</dbReference>
<dbReference type="Pfam" id="PF01699">
    <property type="entry name" value="Na_Ca_ex"/>
    <property type="match status" value="2"/>
</dbReference>
<comment type="function">
    <text evidence="2 3">Vacuolar membrane-localized H(+)-dependent K(+) and Na(+) transporter.</text>
</comment>
<comment type="subcellular location">
    <subcellularLocation>
        <location evidence="2">Vacuole membrane</location>
        <topology evidence="2">Multi-pass membrane protein</topology>
    </subcellularLocation>
</comment>
<comment type="tissue specificity">
    <text evidence="3">Expressed in roots, leaves, stems and flowers.</text>
</comment>
<comment type="induction">
    <text evidence="3">By salt stress and drought stress.</text>
</comment>
<comment type="similarity">
    <text evidence="4">Belongs to the Ca(2+):cation antiporter (CaCA) (TC 2.A.19) family. Cation/calcium exchanger (CCX) subfamily.</text>
</comment>
<name>CCX1_ARATH</name>
<gene>
    <name type="primary">CCX1</name>
    <name type="synonym">CAX7</name>
    <name type="ordered locus">At5g17860</name>
    <name type="ORF">MPI7.2</name>
    <name type="ORF">MVA3_210</name>
</gene>
<sequence length="570" mass="61864">MASLFSSRLGSQSLSLLINIFFIFLIFLHFASQTPPPSGSIQTLNSFAGGDSDSCSGGLASLDDHRSKCSYIRSQSKCGPQGYIDYLKIFFCIFGQSPVLGHLVLSAWLFVLFYLLGDTAASYFCPSLDSLSKVLKLSPTMAGVTLLSLGNGAPDLFSSVVSFTRSNNGDFGLNSILGGAFFVSSFVVGTICVLIGSRDVAIDRNSFIRDVVFLLVALCCLGLIIFIGKVTIWVALCYLSIYLLYVGFLSVSHFFDRKKRMSDQILRSREDLAEMGVSLLGYIAEEKLALPEKTTQEFKIVFEDSPKRHRSCFSVLVSIIGLPLYLPRRLTIPVVCEEKWSKPCAVVSTAIAPVLLTELYCSHYSGSQRNLILYIISGSIGLIVGILAYLTTEKSHPPKKFSLVWLLGGFTMSVTWTYMIAQELVSLLISLGNIFGISPSVLGLTVLAWGNSLGDLIANVTVAFHGGNDGAQIALSGCYAGPLFNTVIGLGVPLVISSLAEYPGVYIIPSDNSLLETLGFLMVGLLWALVIMPKKKMRLDKLVGGGLLAIYLCFLSLRLARVFGVLDTDR</sequence>
<keyword id="KW-0050">Antiport</keyword>
<keyword id="KW-0406">Ion transport</keyword>
<keyword id="KW-0472">Membrane</keyword>
<keyword id="KW-0630">Potassium</keyword>
<keyword id="KW-0633">Potassium transport</keyword>
<keyword id="KW-1185">Reference proteome</keyword>
<keyword id="KW-0915">Sodium</keyword>
<keyword id="KW-0739">Sodium transport</keyword>
<keyword id="KW-0812">Transmembrane</keyword>
<keyword id="KW-1133">Transmembrane helix</keyword>
<keyword id="KW-0813">Transport</keyword>
<keyword id="KW-0926">Vacuole</keyword>
<feature type="chain" id="PRO_0000416822" description="Cation/calcium exchanger 1">
    <location>
        <begin position="1"/>
        <end position="570"/>
    </location>
</feature>
<feature type="transmembrane region" description="Helical" evidence="1">
    <location>
        <begin position="14"/>
        <end position="34"/>
    </location>
</feature>
<feature type="transmembrane region" description="Helical" evidence="1">
    <location>
        <begin position="97"/>
        <end position="117"/>
    </location>
</feature>
<feature type="transmembrane region" description="Helical" evidence="1">
    <location>
        <begin position="141"/>
        <end position="161"/>
    </location>
</feature>
<feature type="transmembrane region" description="Helical" evidence="1">
    <location>
        <begin position="176"/>
        <end position="196"/>
    </location>
</feature>
<feature type="transmembrane region" description="Helical" evidence="1">
    <location>
        <begin position="212"/>
        <end position="232"/>
    </location>
</feature>
<feature type="transmembrane region" description="Helical" evidence="1">
    <location>
        <begin position="235"/>
        <end position="255"/>
    </location>
</feature>
<feature type="transmembrane region" description="Helical" evidence="1">
    <location>
        <begin position="344"/>
        <end position="364"/>
    </location>
</feature>
<feature type="transmembrane region" description="Helical" evidence="1">
    <location>
        <begin position="371"/>
        <end position="391"/>
    </location>
</feature>
<feature type="transmembrane region" description="Helical" evidence="1">
    <location>
        <begin position="401"/>
        <end position="421"/>
    </location>
</feature>
<feature type="transmembrane region" description="Helical" evidence="1">
    <location>
        <begin position="427"/>
        <end position="447"/>
    </location>
</feature>
<feature type="transmembrane region" description="Helical" evidence="1">
    <location>
        <begin position="479"/>
        <end position="499"/>
    </location>
</feature>
<feature type="transmembrane region" description="Helical" evidence="1">
    <location>
        <begin position="513"/>
        <end position="533"/>
    </location>
</feature>
<feature type="transmembrane region" description="Helical" evidence="1">
    <location>
        <begin position="546"/>
        <end position="566"/>
    </location>
</feature>
<feature type="sequence conflict" description="In Ref. 3; AAL58918." evidence="4" ref="3">
    <original>A</original>
    <variation>V</variation>
    <location>
        <position position="48"/>
    </location>
</feature>
<organism>
    <name type="scientific">Arabidopsis thaliana</name>
    <name type="common">Mouse-ear cress</name>
    <dbReference type="NCBI Taxonomy" id="3702"/>
    <lineage>
        <taxon>Eukaryota</taxon>
        <taxon>Viridiplantae</taxon>
        <taxon>Streptophyta</taxon>
        <taxon>Embryophyta</taxon>
        <taxon>Tracheophyta</taxon>
        <taxon>Spermatophyta</taxon>
        <taxon>Magnoliopsida</taxon>
        <taxon>eudicotyledons</taxon>
        <taxon>Gunneridae</taxon>
        <taxon>Pentapetalae</taxon>
        <taxon>rosids</taxon>
        <taxon>malvids</taxon>
        <taxon>Brassicales</taxon>
        <taxon>Brassicaceae</taxon>
        <taxon>Camelineae</taxon>
        <taxon>Arabidopsis</taxon>
    </lineage>
</organism>
<accession>Q9FKP1</accession>
<accession>Q8W102</accession>
<protein>
    <recommendedName>
        <fullName>Cation/calcium exchanger 1</fullName>
        <shortName>AtCCX1</shortName>
    </recommendedName>
    <alternativeName>
        <fullName>Protein CATION EXCHANGER 7</fullName>
    </alternativeName>
</protein>
<proteinExistence type="evidence at transcript level"/>
<reference key="1">
    <citation type="journal article" date="1998" name="DNA Res.">
        <title>Structural analysis of Arabidopsis thaliana chromosome 5. V. Sequence features of the regions of 1,381,565 bp covered by twenty one physically assigned P1 and TAC clones.</title>
        <authorList>
            <person name="Kaneko T."/>
            <person name="Kotani H."/>
            <person name="Nakamura Y."/>
            <person name="Sato S."/>
            <person name="Asamizu E."/>
            <person name="Miyajima N."/>
            <person name="Tabata S."/>
        </authorList>
    </citation>
    <scope>NUCLEOTIDE SEQUENCE [LARGE SCALE GENOMIC DNA]</scope>
    <source>
        <strain>cv. Columbia</strain>
    </source>
</reference>
<reference key="2">
    <citation type="journal article" date="2017" name="Plant J.">
        <title>Araport11: a complete reannotation of the Arabidopsis thaliana reference genome.</title>
        <authorList>
            <person name="Cheng C.Y."/>
            <person name="Krishnakumar V."/>
            <person name="Chan A.P."/>
            <person name="Thibaud-Nissen F."/>
            <person name="Schobel S."/>
            <person name="Town C.D."/>
        </authorList>
    </citation>
    <scope>GENOME REANNOTATION</scope>
    <source>
        <strain>cv. Columbia</strain>
    </source>
</reference>
<reference key="3">
    <citation type="journal article" date="2003" name="Science">
        <title>Empirical analysis of transcriptional activity in the Arabidopsis genome.</title>
        <authorList>
            <person name="Yamada K."/>
            <person name="Lim J."/>
            <person name="Dale J.M."/>
            <person name="Chen H."/>
            <person name="Shinn P."/>
            <person name="Palm C.J."/>
            <person name="Southwick A.M."/>
            <person name="Wu H.C."/>
            <person name="Kim C.J."/>
            <person name="Nguyen M."/>
            <person name="Pham P.K."/>
            <person name="Cheuk R.F."/>
            <person name="Karlin-Newmann G."/>
            <person name="Liu S.X."/>
            <person name="Lam B."/>
            <person name="Sakano H."/>
            <person name="Wu T."/>
            <person name="Yu G."/>
            <person name="Miranda M."/>
            <person name="Quach H.L."/>
            <person name="Tripp M."/>
            <person name="Chang C.H."/>
            <person name="Lee J.M."/>
            <person name="Toriumi M.J."/>
            <person name="Chan M.M."/>
            <person name="Tang C.C."/>
            <person name="Onodera C.S."/>
            <person name="Deng J.M."/>
            <person name="Akiyama K."/>
            <person name="Ansari Y."/>
            <person name="Arakawa T."/>
            <person name="Banh J."/>
            <person name="Banno F."/>
            <person name="Bowser L."/>
            <person name="Brooks S.Y."/>
            <person name="Carninci P."/>
            <person name="Chao Q."/>
            <person name="Choy N."/>
            <person name="Enju A."/>
            <person name="Goldsmith A.D."/>
            <person name="Gurjal M."/>
            <person name="Hansen N.F."/>
            <person name="Hayashizaki Y."/>
            <person name="Johnson-Hopson C."/>
            <person name="Hsuan V.W."/>
            <person name="Iida K."/>
            <person name="Karnes M."/>
            <person name="Khan S."/>
            <person name="Koesema E."/>
            <person name="Ishida J."/>
            <person name="Jiang P.X."/>
            <person name="Jones T."/>
            <person name="Kawai J."/>
            <person name="Kamiya A."/>
            <person name="Meyers C."/>
            <person name="Nakajima M."/>
            <person name="Narusaka M."/>
            <person name="Seki M."/>
            <person name="Sakurai T."/>
            <person name="Satou M."/>
            <person name="Tamse R."/>
            <person name="Vaysberg M."/>
            <person name="Wallender E.K."/>
            <person name="Wong C."/>
            <person name="Yamamura Y."/>
            <person name="Yuan S."/>
            <person name="Shinozaki K."/>
            <person name="Davis R.W."/>
            <person name="Theologis A."/>
            <person name="Ecker J.R."/>
        </authorList>
    </citation>
    <scope>NUCLEOTIDE SEQUENCE [LARGE SCALE MRNA]</scope>
    <source>
        <strain>cv. Columbia</strain>
    </source>
</reference>
<reference key="4">
    <citation type="journal article" date="2001" name="Plant Physiol.">
        <title>Phylogenetic relationships within cation transporter families of Arabidopsis.</title>
        <authorList>
            <person name="Maeser P."/>
            <person name="Thomine S."/>
            <person name="Schroeder J.I."/>
            <person name="Ward J.M."/>
            <person name="Hirschi K."/>
            <person name="Sze H."/>
            <person name="Talke I.N."/>
            <person name="Amtmann A."/>
            <person name="Maathuis F.J.M."/>
            <person name="Sanders D."/>
            <person name="Harper J.F."/>
            <person name="Tchieu J."/>
            <person name="Gribskov M."/>
            <person name="Persans M.W."/>
            <person name="Salt D.E."/>
            <person name="Kim S.A."/>
            <person name="Guerinot M.L."/>
        </authorList>
    </citation>
    <scope>GENE FAMILY</scope>
    <scope>NOMENCLATURE</scope>
</reference>
<reference key="5">
    <citation type="journal article" date="2011" name="Afr. J. Biotechnol.">
        <title>AtCCX1 transports Na+ and K+ in Pitch pastoris.</title>
        <authorList>
            <person name="Chen Z."/>
            <person name="Wu Y."/>
            <person name="Di L."/>
            <person name="Shen Y."/>
            <person name="Wang G."/>
        </authorList>
    </citation>
    <scope>FUNCTION</scope>
    <scope>SUBCELLULAR LOCATION</scope>
</reference>
<reference key="6">
    <citation type="journal article" date="2012" name="Plant Cell Tissue Organ Cult.">
        <title>The AtCCX1 transporter mediates salinity tolerance in both Arabidopsis and yeast.</title>
        <authorList>
            <person name="Chen Z."/>
            <person name="Wu Y."/>
            <person name="Di L."/>
            <person name="Wang G."/>
            <person name="Shen Y."/>
        </authorList>
    </citation>
    <scope>FUNCTION</scope>
    <scope>TISSUE SPECIFICITY</scope>
    <scope>INDUCTION</scope>
    <source>
        <strain>cv. Columbia</strain>
    </source>
</reference>